<dbReference type="EC" id="6.3.2.4" evidence="2"/>
<dbReference type="EMBL" id="CP000026">
    <property type="protein sequence ID" value="AAV76165.1"/>
    <property type="molecule type" value="Genomic_DNA"/>
</dbReference>
<dbReference type="RefSeq" id="WP_000763895.1">
    <property type="nucleotide sequence ID" value="NC_006511.1"/>
</dbReference>
<dbReference type="SMR" id="Q5PDC6"/>
<dbReference type="KEGG" id="spt:SPA0132"/>
<dbReference type="HOGENOM" id="CLU_039268_1_2_6"/>
<dbReference type="UniPathway" id="UPA00219"/>
<dbReference type="Proteomes" id="UP000008185">
    <property type="component" value="Chromosome"/>
</dbReference>
<dbReference type="GO" id="GO:0005829">
    <property type="term" value="C:cytosol"/>
    <property type="evidence" value="ECO:0007669"/>
    <property type="project" value="TreeGrafter"/>
</dbReference>
<dbReference type="GO" id="GO:0005524">
    <property type="term" value="F:ATP binding"/>
    <property type="evidence" value="ECO:0007669"/>
    <property type="project" value="UniProtKB-KW"/>
</dbReference>
<dbReference type="GO" id="GO:0008716">
    <property type="term" value="F:D-alanine-D-alanine ligase activity"/>
    <property type="evidence" value="ECO:0007669"/>
    <property type="project" value="UniProtKB-UniRule"/>
</dbReference>
<dbReference type="GO" id="GO:0046872">
    <property type="term" value="F:metal ion binding"/>
    <property type="evidence" value="ECO:0007669"/>
    <property type="project" value="UniProtKB-KW"/>
</dbReference>
<dbReference type="GO" id="GO:0071555">
    <property type="term" value="P:cell wall organization"/>
    <property type="evidence" value="ECO:0007669"/>
    <property type="project" value="UniProtKB-KW"/>
</dbReference>
<dbReference type="GO" id="GO:0009252">
    <property type="term" value="P:peptidoglycan biosynthetic process"/>
    <property type="evidence" value="ECO:0007669"/>
    <property type="project" value="UniProtKB-UniRule"/>
</dbReference>
<dbReference type="GO" id="GO:0008360">
    <property type="term" value="P:regulation of cell shape"/>
    <property type="evidence" value="ECO:0007669"/>
    <property type="project" value="UniProtKB-KW"/>
</dbReference>
<dbReference type="FunFam" id="3.30.1490.20:FF:000007">
    <property type="entry name" value="D-alanine--D-alanine ligase"/>
    <property type="match status" value="1"/>
</dbReference>
<dbReference type="FunFam" id="3.30.470.20:FF:000008">
    <property type="entry name" value="D-alanine--D-alanine ligase"/>
    <property type="match status" value="1"/>
</dbReference>
<dbReference type="FunFam" id="3.40.50.20:FF:000013">
    <property type="entry name" value="D-alanine--D-alanine ligase"/>
    <property type="match status" value="1"/>
</dbReference>
<dbReference type="Gene3D" id="3.40.50.20">
    <property type="match status" value="1"/>
</dbReference>
<dbReference type="Gene3D" id="3.30.1490.20">
    <property type="entry name" value="ATP-grasp fold, A domain"/>
    <property type="match status" value="1"/>
</dbReference>
<dbReference type="Gene3D" id="3.30.470.20">
    <property type="entry name" value="ATP-grasp fold, B domain"/>
    <property type="match status" value="1"/>
</dbReference>
<dbReference type="HAMAP" id="MF_00047">
    <property type="entry name" value="Dala_Dala_lig"/>
    <property type="match status" value="1"/>
</dbReference>
<dbReference type="InterPro" id="IPR011761">
    <property type="entry name" value="ATP-grasp"/>
</dbReference>
<dbReference type="InterPro" id="IPR013815">
    <property type="entry name" value="ATP_grasp_subdomain_1"/>
</dbReference>
<dbReference type="InterPro" id="IPR000291">
    <property type="entry name" value="D-Ala_lig_Van_CS"/>
</dbReference>
<dbReference type="InterPro" id="IPR005905">
    <property type="entry name" value="D_ala_D_ala"/>
</dbReference>
<dbReference type="InterPro" id="IPR011095">
    <property type="entry name" value="Dala_Dala_lig_C"/>
</dbReference>
<dbReference type="InterPro" id="IPR011127">
    <property type="entry name" value="Dala_Dala_lig_N"/>
</dbReference>
<dbReference type="InterPro" id="IPR016185">
    <property type="entry name" value="PreATP-grasp_dom_sf"/>
</dbReference>
<dbReference type="NCBIfam" id="TIGR01205">
    <property type="entry name" value="D_ala_D_alaTIGR"/>
    <property type="match status" value="1"/>
</dbReference>
<dbReference type="NCBIfam" id="NF002378">
    <property type="entry name" value="PRK01372.1"/>
    <property type="match status" value="1"/>
</dbReference>
<dbReference type="PANTHER" id="PTHR23132">
    <property type="entry name" value="D-ALANINE--D-ALANINE LIGASE"/>
    <property type="match status" value="1"/>
</dbReference>
<dbReference type="PANTHER" id="PTHR23132:SF23">
    <property type="entry name" value="D-ALANINE--D-ALANINE LIGASE B"/>
    <property type="match status" value="1"/>
</dbReference>
<dbReference type="Pfam" id="PF07478">
    <property type="entry name" value="Dala_Dala_lig_C"/>
    <property type="match status" value="1"/>
</dbReference>
<dbReference type="Pfam" id="PF01820">
    <property type="entry name" value="Dala_Dala_lig_N"/>
    <property type="match status" value="1"/>
</dbReference>
<dbReference type="PIRSF" id="PIRSF039102">
    <property type="entry name" value="Ddl/VanB"/>
    <property type="match status" value="1"/>
</dbReference>
<dbReference type="SUPFAM" id="SSF56059">
    <property type="entry name" value="Glutathione synthetase ATP-binding domain-like"/>
    <property type="match status" value="1"/>
</dbReference>
<dbReference type="SUPFAM" id="SSF52440">
    <property type="entry name" value="PreATP-grasp domain"/>
    <property type="match status" value="1"/>
</dbReference>
<dbReference type="PROSITE" id="PS50975">
    <property type="entry name" value="ATP_GRASP"/>
    <property type="match status" value="1"/>
</dbReference>
<dbReference type="PROSITE" id="PS00843">
    <property type="entry name" value="DALA_DALA_LIGASE_1"/>
    <property type="match status" value="1"/>
</dbReference>
<dbReference type="PROSITE" id="PS00844">
    <property type="entry name" value="DALA_DALA_LIGASE_2"/>
    <property type="match status" value="1"/>
</dbReference>
<evidence type="ECO:0000250" key="1"/>
<evidence type="ECO:0000255" key="2">
    <source>
        <dbReference type="HAMAP-Rule" id="MF_00047"/>
    </source>
</evidence>
<organism>
    <name type="scientific">Salmonella paratyphi A (strain ATCC 9150 / SARB42)</name>
    <dbReference type="NCBI Taxonomy" id="295319"/>
    <lineage>
        <taxon>Bacteria</taxon>
        <taxon>Pseudomonadati</taxon>
        <taxon>Pseudomonadota</taxon>
        <taxon>Gammaproteobacteria</taxon>
        <taxon>Enterobacterales</taxon>
        <taxon>Enterobacteriaceae</taxon>
        <taxon>Salmonella</taxon>
    </lineage>
</organism>
<comment type="function">
    <text evidence="2">Cell wall formation.</text>
</comment>
<comment type="catalytic activity">
    <reaction evidence="2">
        <text>2 D-alanine + ATP = D-alanyl-D-alanine + ADP + phosphate + H(+)</text>
        <dbReference type="Rhea" id="RHEA:11224"/>
        <dbReference type="ChEBI" id="CHEBI:15378"/>
        <dbReference type="ChEBI" id="CHEBI:30616"/>
        <dbReference type="ChEBI" id="CHEBI:43474"/>
        <dbReference type="ChEBI" id="CHEBI:57416"/>
        <dbReference type="ChEBI" id="CHEBI:57822"/>
        <dbReference type="ChEBI" id="CHEBI:456216"/>
        <dbReference type="EC" id="6.3.2.4"/>
    </reaction>
</comment>
<comment type="cofactor">
    <cofactor evidence="1">
        <name>Mg(2+)</name>
        <dbReference type="ChEBI" id="CHEBI:18420"/>
    </cofactor>
    <cofactor evidence="1">
        <name>Mn(2+)</name>
        <dbReference type="ChEBI" id="CHEBI:29035"/>
    </cofactor>
    <text evidence="1">Binds 2 magnesium or manganese ions per subunit.</text>
</comment>
<comment type="pathway">
    <text evidence="2">Cell wall biogenesis; peptidoglycan biosynthesis.</text>
</comment>
<comment type="subcellular location">
    <subcellularLocation>
        <location evidence="2">Cytoplasm</location>
    </subcellularLocation>
</comment>
<comment type="similarity">
    <text evidence="2">Belongs to the D-alanine--D-alanine ligase family.</text>
</comment>
<sequence>MADKIAVLLGGTSAERDVSLNSGAAVLAGLREGGIDAHPVDPQEVDVAQLKAMGFQKVFIALHGRGGEDGTLQGMLELLGLPYTGSGVMASALSMDKLRSKLLWQGAGLPVAPWVALTRAEFEKGLSEEQKARISALGLPLIVKPSREGSSVGMTKVVEENALQGALSLAFQHDDEILIEKWLCGPEFTVAIVGEEILPSIRIQPAGTFYDYEAKYLSDETQYFCPAGLEASQEAALQSLVLQAWKALGCTGWGRIDVMLDSDGQFYLLEANTSPGMTSHSLVPMAARQAGMSFSQLVVRILELAD</sequence>
<gene>
    <name evidence="2" type="primary">ddl</name>
    <name type="ordered locus">SPA0132</name>
</gene>
<name>DDL_SALPA</name>
<accession>Q5PDC6</accession>
<keyword id="KW-0067">ATP-binding</keyword>
<keyword id="KW-0133">Cell shape</keyword>
<keyword id="KW-0961">Cell wall biogenesis/degradation</keyword>
<keyword id="KW-0963">Cytoplasm</keyword>
<keyword id="KW-0436">Ligase</keyword>
<keyword id="KW-0460">Magnesium</keyword>
<keyword id="KW-0464">Manganese</keyword>
<keyword id="KW-0479">Metal-binding</keyword>
<keyword id="KW-0547">Nucleotide-binding</keyword>
<keyword id="KW-0573">Peptidoglycan synthesis</keyword>
<protein>
    <recommendedName>
        <fullName evidence="2">D-alanine--D-alanine ligase</fullName>
        <ecNumber evidence="2">6.3.2.4</ecNumber>
    </recommendedName>
    <alternativeName>
        <fullName evidence="2">D-Ala-D-Ala ligase</fullName>
    </alternativeName>
    <alternativeName>
        <fullName evidence="2">D-alanylalanine synthetase</fullName>
    </alternativeName>
</protein>
<reference key="1">
    <citation type="journal article" date="2004" name="Nat. Genet.">
        <title>Comparison of genome degradation in Paratyphi A and Typhi, human-restricted serovars of Salmonella enterica that cause typhoid.</title>
        <authorList>
            <person name="McClelland M."/>
            <person name="Sanderson K.E."/>
            <person name="Clifton S.W."/>
            <person name="Latreille P."/>
            <person name="Porwollik S."/>
            <person name="Sabo A."/>
            <person name="Meyer R."/>
            <person name="Bieri T."/>
            <person name="Ozersky P."/>
            <person name="McLellan M."/>
            <person name="Harkins C.R."/>
            <person name="Wang C."/>
            <person name="Nguyen C."/>
            <person name="Berghoff A."/>
            <person name="Elliott G."/>
            <person name="Kohlberg S."/>
            <person name="Strong C."/>
            <person name="Du F."/>
            <person name="Carter J."/>
            <person name="Kremizki C."/>
            <person name="Layman D."/>
            <person name="Leonard S."/>
            <person name="Sun H."/>
            <person name="Fulton L."/>
            <person name="Nash W."/>
            <person name="Miner T."/>
            <person name="Minx P."/>
            <person name="Delehaunty K."/>
            <person name="Fronick C."/>
            <person name="Magrini V."/>
            <person name="Nhan M."/>
            <person name="Warren W."/>
            <person name="Florea L."/>
            <person name="Spieth J."/>
            <person name="Wilson R.K."/>
        </authorList>
    </citation>
    <scope>NUCLEOTIDE SEQUENCE [LARGE SCALE GENOMIC DNA]</scope>
    <source>
        <strain>ATCC 9150 / SARB42</strain>
    </source>
</reference>
<proteinExistence type="inferred from homology"/>
<feature type="chain" id="PRO_1000030490" description="D-alanine--D-alanine ligase">
    <location>
        <begin position="1"/>
        <end position="306"/>
    </location>
</feature>
<feature type="domain" description="ATP-grasp" evidence="2">
    <location>
        <begin position="101"/>
        <end position="303"/>
    </location>
</feature>
<feature type="binding site" evidence="2">
    <location>
        <begin position="134"/>
        <end position="189"/>
    </location>
    <ligand>
        <name>ATP</name>
        <dbReference type="ChEBI" id="CHEBI:30616"/>
    </ligand>
</feature>
<feature type="binding site" evidence="2">
    <location>
        <position position="257"/>
    </location>
    <ligand>
        <name>Mg(2+)</name>
        <dbReference type="ChEBI" id="CHEBI:18420"/>
        <label>1</label>
    </ligand>
</feature>
<feature type="binding site" evidence="2">
    <location>
        <position position="270"/>
    </location>
    <ligand>
        <name>Mg(2+)</name>
        <dbReference type="ChEBI" id="CHEBI:18420"/>
        <label>1</label>
    </ligand>
</feature>
<feature type="binding site" evidence="2">
    <location>
        <position position="270"/>
    </location>
    <ligand>
        <name>Mg(2+)</name>
        <dbReference type="ChEBI" id="CHEBI:18420"/>
        <label>2</label>
    </ligand>
</feature>
<feature type="binding site" evidence="2">
    <location>
        <position position="272"/>
    </location>
    <ligand>
        <name>Mg(2+)</name>
        <dbReference type="ChEBI" id="CHEBI:18420"/>
        <label>2</label>
    </ligand>
</feature>